<accession>Q217M1</accession>
<keyword id="KW-0997">Cell inner membrane</keyword>
<keyword id="KW-1003">Cell membrane</keyword>
<keyword id="KW-0406">Ion transport</keyword>
<keyword id="KW-0472">Membrane</keyword>
<keyword id="KW-0630">Potassium</keyword>
<keyword id="KW-0633">Potassium transport</keyword>
<keyword id="KW-0769">Symport</keyword>
<keyword id="KW-0812">Transmembrane</keyword>
<keyword id="KW-1133">Transmembrane helix</keyword>
<keyword id="KW-0813">Transport</keyword>
<name>KUP1_RHOPB</name>
<sequence length="620" mass="67492">MSQNTKGAGLLISAIGVVYGDIGTSPLYALKETFAGHHPIAVTPDNVFGVLSLVFWTVMLLVTVKYVIVIMRADNHGEGGSLALLALVTELTRGYRVYYPLMLLGVIAAALFYGDSMITPAISVLSAVEGLEVVTPRLTPYVVPITAVVLTGLFMIQKRGTGLVGKLFGPVMCLWFLVLALLGIVNIVAAPHVLGAINPIYAADFIVKHPMMSFFALGSIVLAVTGGEALYTDMGHFGRFPIRVAWFALVLPALLLNYFGQGALLLSDPSAIQNPFFRQVPEWMVVPMVGLATCATVIASQAVISGAYSVARQAIQLGLLPRMTIVHTSGEEEGQIYIPFTNWTLYIAVMALVIGFQSSSNLAAAYGIAVTGTMMIDTILVAFVMALMWRWHWIAVAAVAGTLLLVDLAFFFANIIKVAQGGWFPLFIGVLSFTVLTTWRRGRELVRNQVKKLAVPLDVVMRALGPNVSRARGTAVFLTAATDGVPPALLHNLKHNQTVHQRVVLATVMTADTPYVPDSERVTMTDLGDGFHRLIIRYGFMQTPDVPAALELCKAFGQEFNMMATSFFLSRETYVPSLNPGMAHWRERLFTFMTLNATRATIFFKIPTDRVVELGTQLEI</sequence>
<comment type="function">
    <text evidence="1">Transport of potassium into the cell. Likely operates as a K(+):H(+) symporter.</text>
</comment>
<comment type="catalytic activity">
    <reaction evidence="1">
        <text>K(+)(in) + H(+)(in) = K(+)(out) + H(+)(out)</text>
        <dbReference type="Rhea" id="RHEA:28490"/>
        <dbReference type="ChEBI" id="CHEBI:15378"/>
        <dbReference type="ChEBI" id="CHEBI:29103"/>
    </reaction>
    <physiologicalReaction direction="right-to-left" evidence="1">
        <dbReference type="Rhea" id="RHEA:28492"/>
    </physiologicalReaction>
</comment>
<comment type="subcellular location">
    <subcellularLocation>
        <location evidence="1">Cell inner membrane</location>
        <topology evidence="1">Multi-pass membrane protein</topology>
    </subcellularLocation>
</comment>
<comment type="similarity">
    <text evidence="1">Belongs to the HAK/KUP transporter (TC 2.A.72) family.</text>
</comment>
<evidence type="ECO:0000255" key="1">
    <source>
        <dbReference type="HAMAP-Rule" id="MF_01522"/>
    </source>
</evidence>
<dbReference type="EMBL" id="CP000301">
    <property type="protein sequence ID" value="ABD87415.1"/>
    <property type="molecule type" value="Genomic_DNA"/>
</dbReference>
<dbReference type="STRING" id="316056.RPC_1856"/>
<dbReference type="KEGG" id="rpc:RPC_1856"/>
<dbReference type="eggNOG" id="COG3158">
    <property type="taxonomic scope" value="Bacteria"/>
</dbReference>
<dbReference type="HOGENOM" id="CLU_008142_4_2_5"/>
<dbReference type="OrthoDB" id="9805577at2"/>
<dbReference type="GO" id="GO:0005886">
    <property type="term" value="C:plasma membrane"/>
    <property type="evidence" value="ECO:0007669"/>
    <property type="project" value="UniProtKB-SubCell"/>
</dbReference>
<dbReference type="GO" id="GO:0015079">
    <property type="term" value="F:potassium ion transmembrane transporter activity"/>
    <property type="evidence" value="ECO:0007669"/>
    <property type="project" value="UniProtKB-UniRule"/>
</dbReference>
<dbReference type="GO" id="GO:0015293">
    <property type="term" value="F:symporter activity"/>
    <property type="evidence" value="ECO:0007669"/>
    <property type="project" value="UniProtKB-UniRule"/>
</dbReference>
<dbReference type="HAMAP" id="MF_01522">
    <property type="entry name" value="Kup"/>
    <property type="match status" value="1"/>
</dbReference>
<dbReference type="InterPro" id="IPR003855">
    <property type="entry name" value="K+_transporter"/>
</dbReference>
<dbReference type="InterPro" id="IPR053952">
    <property type="entry name" value="K_trans_C"/>
</dbReference>
<dbReference type="InterPro" id="IPR053951">
    <property type="entry name" value="K_trans_N"/>
</dbReference>
<dbReference type="InterPro" id="IPR023051">
    <property type="entry name" value="Kup"/>
</dbReference>
<dbReference type="PANTHER" id="PTHR30540:SF79">
    <property type="entry name" value="LOW AFFINITY POTASSIUM TRANSPORT SYSTEM PROTEIN KUP"/>
    <property type="match status" value="1"/>
</dbReference>
<dbReference type="PANTHER" id="PTHR30540">
    <property type="entry name" value="OSMOTIC STRESS POTASSIUM TRANSPORTER"/>
    <property type="match status" value="1"/>
</dbReference>
<dbReference type="Pfam" id="PF02705">
    <property type="entry name" value="K_trans"/>
    <property type="match status" value="1"/>
</dbReference>
<dbReference type="Pfam" id="PF22776">
    <property type="entry name" value="K_trans_C"/>
    <property type="match status" value="1"/>
</dbReference>
<organism>
    <name type="scientific">Rhodopseudomonas palustris (strain BisB18)</name>
    <dbReference type="NCBI Taxonomy" id="316056"/>
    <lineage>
        <taxon>Bacteria</taxon>
        <taxon>Pseudomonadati</taxon>
        <taxon>Pseudomonadota</taxon>
        <taxon>Alphaproteobacteria</taxon>
        <taxon>Hyphomicrobiales</taxon>
        <taxon>Nitrobacteraceae</taxon>
        <taxon>Rhodopseudomonas</taxon>
    </lineage>
</organism>
<proteinExistence type="inferred from homology"/>
<protein>
    <recommendedName>
        <fullName evidence="1">Probable potassium transport system protein Kup 1</fullName>
    </recommendedName>
</protein>
<feature type="chain" id="PRO_5000113578" description="Probable potassium transport system protein Kup 1">
    <location>
        <begin position="1"/>
        <end position="620"/>
    </location>
</feature>
<feature type="transmembrane region" description="Helical" evidence="1">
    <location>
        <begin position="10"/>
        <end position="30"/>
    </location>
</feature>
<feature type="transmembrane region" description="Helical" evidence="1">
    <location>
        <begin position="50"/>
        <end position="70"/>
    </location>
</feature>
<feature type="transmembrane region" description="Helical" evidence="1">
    <location>
        <begin position="102"/>
        <end position="122"/>
    </location>
</feature>
<feature type="transmembrane region" description="Helical" evidence="1">
    <location>
        <begin position="138"/>
        <end position="158"/>
    </location>
</feature>
<feature type="transmembrane region" description="Helical" evidence="1">
    <location>
        <begin position="168"/>
        <end position="188"/>
    </location>
</feature>
<feature type="transmembrane region" description="Helical" evidence="1">
    <location>
        <begin position="211"/>
        <end position="231"/>
    </location>
</feature>
<feature type="transmembrane region" description="Helical" evidence="1">
    <location>
        <begin position="246"/>
        <end position="266"/>
    </location>
</feature>
<feature type="transmembrane region" description="Helical" evidence="1">
    <location>
        <begin position="284"/>
        <end position="304"/>
    </location>
</feature>
<feature type="transmembrane region" description="Helical" evidence="1">
    <location>
        <begin position="336"/>
        <end position="356"/>
    </location>
</feature>
<feature type="transmembrane region" description="Helical" evidence="1">
    <location>
        <begin position="368"/>
        <end position="388"/>
    </location>
</feature>
<feature type="transmembrane region" description="Helical" evidence="1">
    <location>
        <begin position="393"/>
        <end position="413"/>
    </location>
</feature>
<feature type="transmembrane region" description="Helical" evidence="1">
    <location>
        <begin position="415"/>
        <end position="435"/>
    </location>
</feature>
<gene>
    <name evidence="1" type="primary">kup1</name>
    <name type="ordered locus">RPC_1856</name>
</gene>
<reference key="1">
    <citation type="submission" date="2006-03" db="EMBL/GenBank/DDBJ databases">
        <title>Complete sequence of Rhodopseudomonas palustris BisB18.</title>
        <authorList>
            <consortium name="US DOE Joint Genome Institute"/>
            <person name="Copeland A."/>
            <person name="Lucas S."/>
            <person name="Lapidus A."/>
            <person name="Barry K."/>
            <person name="Detter J.C."/>
            <person name="Glavina del Rio T."/>
            <person name="Hammon N."/>
            <person name="Israni S."/>
            <person name="Dalin E."/>
            <person name="Tice H."/>
            <person name="Pitluck S."/>
            <person name="Chain P."/>
            <person name="Malfatti S."/>
            <person name="Shin M."/>
            <person name="Vergez L."/>
            <person name="Schmutz J."/>
            <person name="Larimer F."/>
            <person name="Land M."/>
            <person name="Hauser L."/>
            <person name="Pelletier D.A."/>
            <person name="Kyrpides N."/>
            <person name="Anderson I."/>
            <person name="Oda Y."/>
            <person name="Harwood C.S."/>
            <person name="Richardson P."/>
        </authorList>
    </citation>
    <scope>NUCLEOTIDE SEQUENCE [LARGE SCALE GENOMIC DNA]</scope>
    <source>
        <strain>BisB18</strain>
    </source>
</reference>